<protein>
    <recommendedName>
        <fullName evidence="1">Threonine--tRNA ligase</fullName>
        <ecNumber evidence="1">6.1.1.3</ecNumber>
    </recommendedName>
    <alternativeName>
        <fullName evidence="1">Threonyl-tRNA synthetase</fullName>
        <shortName evidence="1">ThrRS</shortName>
    </alternativeName>
</protein>
<evidence type="ECO:0000255" key="1">
    <source>
        <dbReference type="HAMAP-Rule" id="MF_00184"/>
    </source>
</evidence>
<evidence type="ECO:0000255" key="2">
    <source>
        <dbReference type="PROSITE-ProRule" id="PRU01228"/>
    </source>
</evidence>
<feature type="chain" id="PRO_1000098547" description="Threonine--tRNA ligase">
    <location>
        <begin position="1"/>
        <end position="658"/>
    </location>
</feature>
<feature type="domain" description="TGS" evidence="2">
    <location>
        <begin position="1"/>
        <end position="64"/>
    </location>
</feature>
<feature type="region of interest" description="Catalytic" evidence="1">
    <location>
        <begin position="246"/>
        <end position="548"/>
    </location>
</feature>
<feature type="binding site" evidence="1">
    <location>
        <position position="343"/>
    </location>
    <ligand>
        <name>Zn(2+)</name>
        <dbReference type="ChEBI" id="CHEBI:29105"/>
    </ligand>
</feature>
<feature type="binding site" evidence="1">
    <location>
        <position position="394"/>
    </location>
    <ligand>
        <name>Zn(2+)</name>
        <dbReference type="ChEBI" id="CHEBI:29105"/>
    </ligand>
</feature>
<feature type="binding site" evidence="1">
    <location>
        <position position="525"/>
    </location>
    <ligand>
        <name>Zn(2+)</name>
        <dbReference type="ChEBI" id="CHEBI:29105"/>
    </ligand>
</feature>
<accession>B2S5S6</accession>
<comment type="function">
    <text evidence="1">Catalyzes the attachment of threonine to tRNA(Thr) in a two-step reaction: L-threonine is first activated by ATP to form Thr-AMP and then transferred to the acceptor end of tRNA(Thr). Also edits incorrectly charged L-seryl-tRNA(Thr).</text>
</comment>
<comment type="catalytic activity">
    <reaction evidence="1">
        <text>tRNA(Thr) + L-threonine + ATP = L-threonyl-tRNA(Thr) + AMP + diphosphate + H(+)</text>
        <dbReference type="Rhea" id="RHEA:24624"/>
        <dbReference type="Rhea" id="RHEA-COMP:9670"/>
        <dbReference type="Rhea" id="RHEA-COMP:9704"/>
        <dbReference type="ChEBI" id="CHEBI:15378"/>
        <dbReference type="ChEBI" id="CHEBI:30616"/>
        <dbReference type="ChEBI" id="CHEBI:33019"/>
        <dbReference type="ChEBI" id="CHEBI:57926"/>
        <dbReference type="ChEBI" id="CHEBI:78442"/>
        <dbReference type="ChEBI" id="CHEBI:78534"/>
        <dbReference type="ChEBI" id="CHEBI:456215"/>
        <dbReference type="EC" id="6.1.1.3"/>
    </reaction>
</comment>
<comment type="cofactor">
    <cofactor evidence="1">
        <name>Zn(2+)</name>
        <dbReference type="ChEBI" id="CHEBI:29105"/>
    </cofactor>
    <text evidence="1">Binds 1 zinc ion per subunit.</text>
</comment>
<comment type="subunit">
    <text evidence="1">Homodimer.</text>
</comment>
<comment type="subcellular location">
    <subcellularLocation>
        <location evidence="1">Cytoplasm</location>
    </subcellularLocation>
</comment>
<comment type="similarity">
    <text evidence="1">Belongs to the class-II aminoacyl-tRNA synthetase family.</text>
</comment>
<keyword id="KW-0030">Aminoacyl-tRNA synthetase</keyword>
<keyword id="KW-0067">ATP-binding</keyword>
<keyword id="KW-0963">Cytoplasm</keyword>
<keyword id="KW-0436">Ligase</keyword>
<keyword id="KW-0479">Metal-binding</keyword>
<keyword id="KW-0547">Nucleotide-binding</keyword>
<keyword id="KW-0648">Protein biosynthesis</keyword>
<keyword id="KW-0694">RNA-binding</keyword>
<keyword id="KW-0820">tRNA-binding</keyword>
<keyword id="KW-0862">Zinc</keyword>
<reference key="1">
    <citation type="journal article" date="2008" name="PLoS ONE">
        <title>Genome sequence of Brucella abortus vaccine strain S19 compared to virulent strains yields candidate virulence genes.</title>
        <authorList>
            <person name="Crasta O.R."/>
            <person name="Folkerts O."/>
            <person name="Fei Z."/>
            <person name="Mane S.P."/>
            <person name="Evans C."/>
            <person name="Martino-Catt S."/>
            <person name="Bricker B."/>
            <person name="Yu G."/>
            <person name="Du L."/>
            <person name="Sobral B.W."/>
        </authorList>
    </citation>
    <scope>NUCLEOTIDE SEQUENCE [LARGE SCALE GENOMIC DNA]</scope>
    <source>
        <strain>S19</strain>
    </source>
</reference>
<organism>
    <name type="scientific">Brucella abortus (strain S19)</name>
    <dbReference type="NCBI Taxonomy" id="430066"/>
    <lineage>
        <taxon>Bacteria</taxon>
        <taxon>Pseudomonadati</taxon>
        <taxon>Pseudomonadota</taxon>
        <taxon>Alphaproteobacteria</taxon>
        <taxon>Hyphomicrobiales</taxon>
        <taxon>Brucellaceae</taxon>
        <taxon>Brucella/Ochrobactrum group</taxon>
        <taxon>Brucella</taxon>
    </lineage>
</organism>
<proteinExistence type="inferred from homology"/>
<gene>
    <name evidence="1" type="primary">thrS</name>
    <name type="ordered locus">BAbS19_I10140</name>
</gene>
<name>SYT_BRUA1</name>
<dbReference type="EC" id="6.1.1.3" evidence="1"/>
<dbReference type="EMBL" id="CP000887">
    <property type="protein sequence ID" value="ACD72523.1"/>
    <property type="molecule type" value="Genomic_DNA"/>
</dbReference>
<dbReference type="RefSeq" id="WP_002969106.1">
    <property type="nucleotide sequence ID" value="NC_010742.1"/>
</dbReference>
<dbReference type="SMR" id="B2S5S6"/>
<dbReference type="GeneID" id="93016584"/>
<dbReference type="KEGG" id="bmc:BAbS19_I10140"/>
<dbReference type="HOGENOM" id="CLU_008554_0_1_5"/>
<dbReference type="Proteomes" id="UP000002565">
    <property type="component" value="Chromosome 1"/>
</dbReference>
<dbReference type="GO" id="GO:0005829">
    <property type="term" value="C:cytosol"/>
    <property type="evidence" value="ECO:0007669"/>
    <property type="project" value="TreeGrafter"/>
</dbReference>
<dbReference type="GO" id="GO:0005524">
    <property type="term" value="F:ATP binding"/>
    <property type="evidence" value="ECO:0007669"/>
    <property type="project" value="UniProtKB-UniRule"/>
</dbReference>
<dbReference type="GO" id="GO:0046872">
    <property type="term" value="F:metal ion binding"/>
    <property type="evidence" value="ECO:0007669"/>
    <property type="project" value="UniProtKB-KW"/>
</dbReference>
<dbReference type="GO" id="GO:0004829">
    <property type="term" value="F:threonine-tRNA ligase activity"/>
    <property type="evidence" value="ECO:0007669"/>
    <property type="project" value="UniProtKB-UniRule"/>
</dbReference>
<dbReference type="GO" id="GO:0000049">
    <property type="term" value="F:tRNA binding"/>
    <property type="evidence" value="ECO:0007669"/>
    <property type="project" value="UniProtKB-KW"/>
</dbReference>
<dbReference type="GO" id="GO:0006435">
    <property type="term" value="P:threonyl-tRNA aminoacylation"/>
    <property type="evidence" value="ECO:0007669"/>
    <property type="project" value="UniProtKB-UniRule"/>
</dbReference>
<dbReference type="CDD" id="cd01667">
    <property type="entry name" value="TGS_ThrRS"/>
    <property type="match status" value="1"/>
</dbReference>
<dbReference type="CDD" id="cd00860">
    <property type="entry name" value="ThrRS_anticodon"/>
    <property type="match status" value="1"/>
</dbReference>
<dbReference type="CDD" id="cd00771">
    <property type="entry name" value="ThrRS_core"/>
    <property type="match status" value="1"/>
</dbReference>
<dbReference type="FunFam" id="3.30.54.20:FF:000002">
    <property type="entry name" value="Threonine--tRNA ligase"/>
    <property type="match status" value="1"/>
</dbReference>
<dbReference type="FunFam" id="3.30.930.10:FF:000002">
    <property type="entry name" value="Threonine--tRNA ligase"/>
    <property type="match status" value="1"/>
</dbReference>
<dbReference type="FunFam" id="3.40.50.800:FF:000001">
    <property type="entry name" value="Threonine--tRNA ligase"/>
    <property type="match status" value="1"/>
</dbReference>
<dbReference type="FunFam" id="3.30.980.10:FF:000005">
    <property type="entry name" value="Threonyl-tRNA synthetase, mitochondrial"/>
    <property type="match status" value="1"/>
</dbReference>
<dbReference type="Gene3D" id="3.10.20.30">
    <property type="match status" value="1"/>
</dbReference>
<dbReference type="Gene3D" id="3.30.54.20">
    <property type="match status" value="1"/>
</dbReference>
<dbReference type="Gene3D" id="3.40.50.800">
    <property type="entry name" value="Anticodon-binding domain"/>
    <property type="match status" value="1"/>
</dbReference>
<dbReference type="Gene3D" id="3.30.930.10">
    <property type="entry name" value="Bira Bifunctional Protein, Domain 2"/>
    <property type="match status" value="1"/>
</dbReference>
<dbReference type="Gene3D" id="3.30.980.10">
    <property type="entry name" value="Threonyl-trna Synthetase, Chain A, domain 2"/>
    <property type="match status" value="1"/>
</dbReference>
<dbReference type="HAMAP" id="MF_00184">
    <property type="entry name" value="Thr_tRNA_synth"/>
    <property type="match status" value="1"/>
</dbReference>
<dbReference type="InterPro" id="IPR002314">
    <property type="entry name" value="aa-tRNA-synt_IIb"/>
</dbReference>
<dbReference type="InterPro" id="IPR006195">
    <property type="entry name" value="aa-tRNA-synth_II"/>
</dbReference>
<dbReference type="InterPro" id="IPR045864">
    <property type="entry name" value="aa-tRNA-synth_II/BPL/LPL"/>
</dbReference>
<dbReference type="InterPro" id="IPR004154">
    <property type="entry name" value="Anticodon-bd"/>
</dbReference>
<dbReference type="InterPro" id="IPR036621">
    <property type="entry name" value="Anticodon-bd_dom_sf"/>
</dbReference>
<dbReference type="InterPro" id="IPR012675">
    <property type="entry name" value="Beta-grasp_dom_sf"/>
</dbReference>
<dbReference type="InterPro" id="IPR004095">
    <property type="entry name" value="TGS"/>
</dbReference>
<dbReference type="InterPro" id="IPR012676">
    <property type="entry name" value="TGS-like"/>
</dbReference>
<dbReference type="InterPro" id="IPR002320">
    <property type="entry name" value="Thr-tRNA-ligase_IIa"/>
</dbReference>
<dbReference type="InterPro" id="IPR018163">
    <property type="entry name" value="Thr/Ala-tRNA-synth_IIc_edit"/>
</dbReference>
<dbReference type="InterPro" id="IPR047246">
    <property type="entry name" value="ThrRS_anticodon"/>
</dbReference>
<dbReference type="InterPro" id="IPR033728">
    <property type="entry name" value="ThrRS_core"/>
</dbReference>
<dbReference type="InterPro" id="IPR012947">
    <property type="entry name" value="tRNA_SAD"/>
</dbReference>
<dbReference type="NCBIfam" id="TIGR00418">
    <property type="entry name" value="thrS"/>
    <property type="match status" value="1"/>
</dbReference>
<dbReference type="PANTHER" id="PTHR11451:SF44">
    <property type="entry name" value="THREONINE--TRNA LIGASE, CHLOROPLASTIC_MITOCHONDRIAL 2"/>
    <property type="match status" value="1"/>
</dbReference>
<dbReference type="PANTHER" id="PTHR11451">
    <property type="entry name" value="THREONINE-TRNA LIGASE"/>
    <property type="match status" value="1"/>
</dbReference>
<dbReference type="Pfam" id="PF03129">
    <property type="entry name" value="HGTP_anticodon"/>
    <property type="match status" value="1"/>
</dbReference>
<dbReference type="Pfam" id="PF02824">
    <property type="entry name" value="TGS"/>
    <property type="match status" value="1"/>
</dbReference>
<dbReference type="Pfam" id="PF00587">
    <property type="entry name" value="tRNA-synt_2b"/>
    <property type="match status" value="1"/>
</dbReference>
<dbReference type="Pfam" id="PF07973">
    <property type="entry name" value="tRNA_SAD"/>
    <property type="match status" value="1"/>
</dbReference>
<dbReference type="PRINTS" id="PR01047">
    <property type="entry name" value="TRNASYNTHTHR"/>
</dbReference>
<dbReference type="SMART" id="SM00863">
    <property type="entry name" value="tRNA_SAD"/>
    <property type="match status" value="1"/>
</dbReference>
<dbReference type="SUPFAM" id="SSF52954">
    <property type="entry name" value="Class II aaRS ABD-related"/>
    <property type="match status" value="1"/>
</dbReference>
<dbReference type="SUPFAM" id="SSF55681">
    <property type="entry name" value="Class II aaRS and biotin synthetases"/>
    <property type="match status" value="1"/>
</dbReference>
<dbReference type="SUPFAM" id="SSF81271">
    <property type="entry name" value="TGS-like"/>
    <property type="match status" value="1"/>
</dbReference>
<dbReference type="SUPFAM" id="SSF55186">
    <property type="entry name" value="ThrRS/AlaRS common domain"/>
    <property type="match status" value="1"/>
</dbReference>
<dbReference type="PROSITE" id="PS50862">
    <property type="entry name" value="AA_TRNA_LIGASE_II"/>
    <property type="match status" value="1"/>
</dbReference>
<dbReference type="PROSITE" id="PS51880">
    <property type="entry name" value="TGS"/>
    <property type="match status" value="1"/>
</dbReference>
<sequence>MSNTVSLQFPDGSVREYDASMTGAALAESISKSLAKKAVAYAVDGTVRDLSDPLGASGKLEIITREDPRALELIRHDTAHVLAEAVQELFPGTQVTIGPVIENGFYYDFARNEPFTLDDLPVIEKKMREIIQRNKPFTKEVWSREKAKQVFSDKGESYKVELVDAIPAGQDLKIYYQGDWFDLCRGPHMASTGQIGNSFKLMKVAGAYWRGDANNPMLTRIYGTAFANDNDLQAYLHMLEEAEKRDHRRLGREMDLFHFQEEGPGVVFWHAKGWKMFQNLVSYMRRRLDSHGYQEVNTPQVLDKSLWETSGHWGWYRDNMFKVTVAGDDTDDDRVFALKPMNCPGHVQIFKHGLKSYRDLPIKLAEFGNVHRYEPSGALHGLMRVRGFTQDDAHIFCTEEQMAAECLHINDLILSVYKDFGFEEITIKLSTRPEKRVGSDELWDRAESVMMTVLEQIRQQSNNIKTGILPGEGAFYGPKFEYTLKDAIGREWQCGTTQVDFNLPERFGAFYIGADSEKKQPVMIHRAICGSMERFLGILIENFAGHMPLWFAPVQVVVATITSDADEYAKEAAAKLKAAGLQVVTDLRNEKINYKVREHSLQKVPVILVCGKREAEEKTVNMRRLGSRDQESMTLDEAIARLCEEATPPDLLRLKNAG</sequence>